<feature type="chain" id="PRO_0000195557" description="ATP synthase F(0) complex subunit 8">
    <location>
        <begin position="1"/>
        <end position="55"/>
    </location>
</feature>
<feature type="transmembrane region" description="Helical" evidence="3">
    <location>
        <begin position="10"/>
        <end position="30"/>
    </location>
</feature>
<feature type="region of interest" description="Disordered" evidence="4">
    <location>
        <begin position="35"/>
        <end position="55"/>
    </location>
</feature>
<feature type="compositionally biased region" description="Low complexity" evidence="4">
    <location>
        <begin position="37"/>
        <end position="55"/>
    </location>
</feature>
<feature type="sequence conflict" description="In Ref. 1; AAQ92325 and 4; AAP33117/AAP33125." evidence="5" ref="1 4">
    <original>F</original>
    <variation>L</variation>
    <location>
        <position position="20"/>
    </location>
</feature>
<feature type="sequence conflict" description="In Ref. 1; AAQ92325 and 4; AAP33117/AAP33125." evidence="5" ref="1 4">
    <original>TT</original>
    <variation>ATN</variation>
    <location>
        <begin position="43"/>
        <end position="44"/>
    </location>
</feature>
<gene>
    <name evidence="1" type="primary">MT-ATP8</name>
    <name type="synonym">ATP8</name>
    <name type="synonym">ATPASE8</name>
    <name type="synonym">MTATP8</name>
</gene>
<protein>
    <recommendedName>
        <fullName evidence="1">ATP synthase F(0) complex subunit 8</fullName>
    </recommendedName>
    <alternativeName>
        <fullName>A6L</fullName>
    </alternativeName>
    <alternativeName>
        <fullName>F-ATPase subunit 8</fullName>
    </alternativeName>
</protein>
<dbReference type="EMBL" id="AF076363">
    <property type="protein sequence ID" value="AAQ92325.1"/>
    <property type="molecule type" value="Genomic_DNA"/>
</dbReference>
<dbReference type="EMBL" id="AF168040">
    <property type="protein sequence ID" value="AAD56468.2"/>
    <property type="molecule type" value="Genomic_DNA"/>
</dbReference>
<dbReference type="EMBL" id="AY274300">
    <property type="protein sequence ID" value="AAP33117.1"/>
    <property type="molecule type" value="Genomic_DNA"/>
</dbReference>
<dbReference type="EMBL" id="AY274301">
    <property type="protein sequence ID" value="AAP33125.1"/>
    <property type="molecule type" value="Genomic_DNA"/>
</dbReference>
<dbReference type="SMR" id="Q9TBI5"/>
<dbReference type="GO" id="GO:0031966">
    <property type="term" value="C:mitochondrial membrane"/>
    <property type="evidence" value="ECO:0007669"/>
    <property type="project" value="UniProtKB-SubCell"/>
</dbReference>
<dbReference type="GO" id="GO:0045259">
    <property type="term" value="C:proton-transporting ATP synthase complex"/>
    <property type="evidence" value="ECO:0007669"/>
    <property type="project" value="UniProtKB-KW"/>
</dbReference>
<dbReference type="GO" id="GO:0015078">
    <property type="term" value="F:proton transmembrane transporter activity"/>
    <property type="evidence" value="ECO:0007669"/>
    <property type="project" value="InterPro"/>
</dbReference>
<dbReference type="GO" id="GO:0015986">
    <property type="term" value="P:proton motive force-driven ATP synthesis"/>
    <property type="evidence" value="ECO:0007669"/>
    <property type="project" value="InterPro"/>
</dbReference>
<dbReference type="InterPro" id="IPR001421">
    <property type="entry name" value="ATP8_metazoa"/>
</dbReference>
<dbReference type="InterPro" id="IPR050635">
    <property type="entry name" value="ATPase_protein_8"/>
</dbReference>
<dbReference type="PANTHER" id="PTHR39937">
    <property type="entry name" value="ATP SYNTHASE PROTEIN 8"/>
    <property type="match status" value="1"/>
</dbReference>
<dbReference type="PANTHER" id="PTHR39937:SF1">
    <property type="entry name" value="ATP SYNTHASE PROTEIN 8"/>
    <property type="match status" value="1"/>
</dbReference>
<dbReference type="Pfam" id="PF00895">
    <property type="entry name" value="ATP-synt_8"/>
    <property type="match status" value="1"/>
</dbReference>
<comment type="function">
    <text evidence="1 2">Subunit 8, of the mitochondrial membrane ATP synthase complex (F(1)F(0) ATP synthase or Complex V) that produces ATP from ADP in the presence of a proton gradient across the membrane which is generated by electron transport complexes of the respiratory chain. ATP synthase complex consist of a soluble F(1) head domain - the catalytic core - and a membrane F(1) domain - the membrane proton channel. These two domains are linked by a central stalk rotating inside the F(1) region and a stationary peripheral stalk. During catalysis, ATP synthesis in the catalytic domain of F(1) is coupled via a rotary mechanism of the central stalk subunits to proton translocation (By similarity). In vivo, can only synthesize ATP although its ATP hydrolase activity can be activated artificially in vitro (By similarity). Part of the complex F(0) domain (By similarity).</text>
</comment>
<comment type="subunit">
    <text evidence="1">Component of the ATP synthase complex composed at least of ATP5F1A/subunit alpha, ATP5F1B/subunit beta, ATP5MC1/subunit c (homooctomer), MT-ATP6/subunit a, MT-ATP8/subunit 8, ATP5ME/subunit e, ATP5MF/subunit f, ATP5MG/subunit g, ATP5MK/subunit k, ATP5MJ/subunit j, ATP5F1C/subunit gamma, ATP5F1D/subunit delta, ATP5F1E/subunit epsilon, ATP5PF/subunit F6, ATP5PB/subunit b, ATP5PD/subunit d, ATP5PO/subunit OSCP. ATP synthase complex consists of a soluble F(1) head domain (subunits alpha(3) and beta(3)) - the catalytic core - and a membrane F(0) domain - the membrane proton channel (subunits c, a, 8, e, f, g, k and j). These two domains are linked by a central stalk (subunits gamma, delta, and epsilon) rotating inside the F1 region and a stationary peripheral stalk (subunits F6, b, d, and OSCP).</text>
</comment>
<comment type="subcellular location">
    <subcellularLocation>
        <location>Mitochondrion membrane</location>
        <topology>Single-pass membrane protein</topology>
    </subcellularLocation>
</comment>
<comment type="similarity">
    <text evidence="5">Belongs to the ATPase protein 8 family.</text>
</comment>
<organism>
    <name type="scientific">Opisthocomus hoazin</name>
    <name type="common">Hoatzin</name>
    <name type="synonym">Phasianus hoazin</name>
    <dbReference type="NCBI Taxonomy" id="30419"/>
    <lineage>
        <taxon>Eukaryota</taxon>
        <taxon>Metazoa</taxon>
        <taxon>Chordata</taxon>
        <taxon>Craniata</taxon>
        <taxon>Vertebrata</taxon>
        <taxon>Euteleostomi</taxon>
        <taxon>Archelosauria</taxon>
        <taxon>Archosauria</taxon>
        <taxon>Dinosauria</taxon>
        <taxon>Saurischia</taxon>
        <taxon>Theropoda</taxon>
        <taxon>Coelurosauria</taxon>
        <taxon>Aves</taxon>
        <taxon>Neognathae</taxon>
        <taxon>Neoaves</taxon>
        <taxon>Opisthocomiformes</taxon>
        <taxon>Opisthocomidae</taxon>
        <taxon>Opisthocomus</taxon>
    </lineage>
</organism>
<keyword id="KW-0066">ATP synthesis</keyword>
<keyword id="KW-0138">CF(0)</keyword>
<keyword id="KW-0375">Hydrogen ion transport</keyword>
<keyword id="KW-0406">Ion transport</keyword>
<keyword id="KW-0472">Membrane</keyword>
<keyword id="KW-0496">Mitochondrion</keyword>
<keyword id="KW-0812">Transmembrane</keyword>
<keyword id="KW-1133">Transmembrane helix</keyword>
<keyword id="KW-0813">Transport</keyword>
<evidence type="ECO:0000250" key="1">
    <source>
        <dbReference type="UniProtKB" id="P03928"/>
    </source>
</evidence>
<evidence type="ECO:0000250" key="2">
    <source>
        <dbReference type="UniProtKB" id="P19483"/>
    </source>
</evidence>
<evidence type="ECO:0000255" key="3"/>
<evidence type="ECO:0000256" key="4">
    <source>
        <dbReference type="SAM" id="MobiDB-lite"/>
    </source>
</evidence>
<evidence type="ECO:0000305" key="5"/>
<sequence length="55" mass="6485">MPQLNPTPWFPIMMLSWLIFSLIIQPKLLLFTPTNPPSNKTTTTTRSNPWTWPWT</sequence>
<geneLocation type="mitochondrion"/>
<reference key="1">
    <citation type="journal article" date="1998" name="Mol. Biol. Evol.">
        <title>An extra nucleotide is not translated in mitochondrial ND3 of some birds and turtles.</title>
        <authorList>
            <person name="Mindell D.P."/>
            <person name="Sorenson M.D."/>
            <person name="Dimcheff D.E."/>
        </authorList>
    </citation>
    <scope>NUCLEOTIDE SEQUENCE [GENOMIC DNA]</scope>
</reference>
<reference key="2">
    <citation type="journal article" date="1999" name="Mol. Biol. Evol.">
        <title>Phylogenetic relationships of the enigmatic hoatzin (Opisthocomus hoazin) resolved using mitochondrial and nuclear gene sequences.</title>
        <authorList>
            <person name="Hughes J.M."/>
            <person name="Baker A.J."/>
        </authorList>
    </citation>
    <scope>NUCLEOTIDE SEQUENCE [GENOMIC DNA]</scope>
</reference>
<reference key="3">
    <citation type="submission" date="2005-10" db="EMBL/GenBank/DDBJ databases">
        <authorList>
            <person name="Hughes J.M."/>
            <person name="Baker A.J."/>
        </authorList>
    </citation>
    <scope>SEQUENCE REVISION TO 7 AND 14-15</scope>
</reference>
<reference key="4">
    <citation type="journal article" date="2003" name="Mol. Biol. Evol.">
        <title>More taxa, more characters: the hoatzin problem is still unresolved.</title>
        <authorList>
            <person name="Sorenson M.D."/>
            <person name="Oneal E."/>
            <person name="Garcia-Moreno J."/>
            <person name="Mindell D.P."/>
        </authorList>
    </citation>
    <scope>NUCLEOTIDE SEQUENCE [GENOMIC DNA]</scope>
</reference>
<name>ATP8_OPIHO</name>
<proteinExistence type="inferred from homology"/>
<accession>Q9TBI5</accession>
<accession>Q7J3X4</accession>